<comment type="catalytic activity">
    <reaction evidence="1">
        <text>tRNA(Phe) + L-phenylalanine + ATP = L-phenylalanyl-tRNA(Phe) + AMP + diphosphate + H(+)</text>
        <dbReference type="Rhea" id="RHEA:19413"/>
        <dbReference type="Rhea" id="RHEA-COMP:9668"/>
        <dbReference type="Rhea" id="RHEA-COMP:9699"/>
        <dbReference type="ChEBI" id="CHEBI:15378"/>
        <dbReference type="ChEBI" id="CHEBI:30616"/>
        <dbReference type="ChEBI" id="CHEBI:33019"/>
        <dbReference type="ChEBI" id="CHEBI:58095"/>
        <dbReference type="ChEBI" id="CHEBI:78442"/>
        <dbReference type="ChEBI" id="CHEBI:78531"/>
        <dbReference type="ChEBI" id="CHEBI:456215"/>
        <dbReference type="EC" id="6.1.1.20"/>
    </reaction>
</comment>
<comment type="cofactor">
    <cofactor evidence="1">
        <name>Mg(2+)</name>
        <dbReference type="ChEBI" id="CHEBI:18420"/>
    </cofactor>
    <text evidence="1">Binds 2 magnesium ions per tetramer.</text>
</comment>
<comment type="subunit">
    <text evidence="1">Tetramer of two alpha and two beta subunits.</text>
</comment>
<comment type="subcellular location">
    <subcellularLocation>
        <location evidence="1">Cytoplasm</location>
    </subcellularLocation>
</comment>
<comment type="similarity">
    <text evidence="1">Belongs to the class-II aminoacyl-tRNA synthetase family. Phe-tRNA synthetase alpha subunit type 1 subfamily.</text>
</comment>
<sequence>MTDLSDFVANAQKEIKNAQNTEALDLIRVSYFGKKGHFSTHMASLSQLSVEDRPAAGRVINQAKKQIQQWLDTRKKTLQSELLARRLSSEIIDVSLPGRRLQHGGLHPVTLTIQRIECFFKKWGFSVESGPEIEDSEHNFDALNIPSHHPARTEQDTFWFDSERLLRTQTSGVQIRTMKKKGPPLRVIAPGRVYRHDYDQTHTPMFHQMEGLILDSDISFANLKNTLQCFLQYFFQKELPTRFRPSYFPFTEPSAEVDVMTQNGEWLEVLGCGMVHPNILTHLNIDPEHYSGFAFGMGIERLAMIAYGVTDLRAFFENDVRFLKQFK</sequence>
<reference key="1">
    <citation type="journal article" date="2009" name="Proc. Natl. Acad. Sci. U.S.A.">
        <title>Hamiltonella defensa, genome evolution of protective bacterial endosymbiont from pathogenic ancestors.</title>
        <authorList>
            <person name="Degnan P.H."/>
            <person name="Yu Y."/>
            <person name="Sisneros N."/>
            <person name="Wing R.A."/>
            <person name="Moran N.A."/>
        </authorList>
    </citation>
    <scope>NUCLEOTIDE SEQUENCE [LARGE SCALE GENOMIC DNA]</scope>
    <source>
        <strain>5AT</strain>
    </source>
</reference>
<proteinExistence type="inferred from homology"/>
<dbReference type="EC" id="6.1.1.20" evidence="1"/>
<dbReference type="EMBL" id="CP001277">
    <property type="protein sequence ID" value="ACQ68423.1"/>
    <property type="molecule type" value="Genomic_DNA"/>
</dbReference>
<dbReference type="RefSeq" id="WP_015874187.1">
    <property type="nucleotide sequence ID" value="NC_012751.1"/>
</dbReference>
<dbReference type="SMR" id="C4K781"/>
<dbReference type="STRING" id="572265.HDEF_1828"/>
<dbReference type="GeneID" id="66261415"/>
<dbReference type="KEGG" id="hde:HDEF_1828"/>
<dbReference type="eggNOG" id="COG0016">
    <property type="taxonomic scope" value="Bacteria"/>
</dbReference>
<dbReference type="HOGENOM" id="CLU_025086_0_1_6"/>
<dbReference type="Proteomes" id="UP000002334">
    <property type="component" value="Chromosome"/>
</dbReference>
<dbReference type="GO" id="GO:0005737">
    <property type="term" value="C:cytoplasm"/>
    <property type="evidence" value="ECO:0007669"/>
    <property type="project" value="UniProtKB-SubCell"/>
</dbReference>
<dbReference type="GO" id="GO:0005524">
    <property type="term" value="F:ATP binding"/>
    <property type="evidence" value="ECO:0007669"/>
    <property type="project" value="UniProtKB-UniRule"/>
</dbReference>
<dbReference type="GO" id="GO:0000287">
    <property type="term" value="F:magnesium ion binding"/>
    <property type="evidence" value="ECO:0007669"/>
    <property type="project" value="UniProtKB-UniRule"/>
</dbReference>
<dbReference type="GO" id="GO:0004826">
    <property type="term" value="F:phenylalanine-tRNA ligase activity"/>
    <property type="evidence" value="ECO:0007669"/>
    <property type="project" value="UniProtKB-UniRule"/>
</dbReference>
<dbReference type="GO" id="GO:0000049">
    <property type="term" value="F:tRNA binding"/>
    <property type="evidence" value="ECO:0007669"/>
    <property type="project" value="InterPro"/>
</dbReference>
<dbReference type="GO" id="GO:0006432">
    <property type="term" value="P:phenylalanyl-tRNA aminoacylation"/>
    <property type="evidence" value="ECO:0007669"/>
    <property type="project" value="UniProtKB-UniRule"/>
</dbReference>
<dbReference type="CDD" id="cd00496">
    <property type="entry name" value="PheRS_alpha_core"/>
    <property type="match status" value="1"/>
</dbReference>
<dbReference type="FunFam" id="3.30.930.10:FF:000003">
    <property type="entry name" value="Phenylalanine--tRNA ligase alpha subunit"/>
    <property type="match status" value="1"/>
</dbReference>
<dbReference type="Gene3D" id="3.30.930.10">
    <property type="entry name" value="Bira Bifunctional Protein, Domain 2"/>
    <property type="match status" value="1"/>
</dbReference>
<dbReference type="HAMAP" id="MF_00281">
    <property type="entry name" value="Phe_tRNA_synth_alpha1"/>
    <property type="match status" value="1"/>
</dbReference>
<dbReference type="InterPro" id="IPR006195">
    <property type="entry name" value="aa-tRNA-synth_II"/>
</dbReference>
<dbReference type="InterPro" id="IPR045864">
    <property type="entry name" value="aa-tRNA-synth_II/BPL/LPL"/>
</dbReference>
<dbReference type="InterPro" id="IPR004529">
    <property type="entry name" value="Phe-tRNA-synth_IIc_asu"/>
</dbReference>
<dbReference type="InterPro" id="IPR004188">
    <property type="entry name" value="Phe-tRNA_ligase_II_N"/>
</dbReference>
<dbReference type="InterPro" id="IPR022911">
    <property type="entry name" value="Phe_tRNA_ligase_alpha1_bac"/>
</dbReference>
<dbReference type="InterPro" id="IPR002319">
    <property type="entry name" value="Phenylalanyl-tRNA_Synthase"/>
</dbReference>
<dbReference type="InterPro" id="IPR010978">
    <property type="entry name" value="tRNA-bd_arm"/>
</dbReference>
<dbReference type="NCBIfam" id="TIGR00468">
    <property type="entry name" value="pheS"/>
    <property type="match status" value="1"/>
</dbReference>
<dbReference type="PANTHER" id="PTHR11538:SF41">
    <property type="entry name" value="PHENYLALANINE--TRNA LIGASE, MITOCHONDRIAL"/>
    <property type="match status" value="1"/>
</dbReference>
<dbReference type="PANTHER" id="PTHR11538">
    <property type="entry name" value="PHENYLALANYL-TRNA SYNTHETASE"/>
    <property type="match status" value="1"/>
</dbReference>
<dbReference type="Pfam" id="PF02912">
    <property type="entry name" value="Phe_tRNA-synt_N"/>
    <property type="match status" value="1"/>
</dbReference>
<dbReference type="Pfam" id="PF01409">
    <property type="entry name" value="tRNA-synt_2d"/>
    <property type="match status" value="1"/>
</dbReference>
<dbReference type="SUPFAM" id="SSF55681">
    <property type="entry name" value="Class II aaRS and biotin synthetases"/>
    <property type="match status" value="1"/>
</dbReference>
<dbReference type="SUPFAM" id="SSF46589">
    <property type="entry name" value="tRNA-binding arm"/>
    <property type="match status" value="1"/>
</dbReference>
<dbReference type="PROSITE" id="PS50862">
    <property type="entry name" value="AA_TRNA_LIGASE_II"/>
    <property type="match status" value="1"/>
</dbReference>
<organism>
    <name type="scientific">Hamiltonella defensa subsp. Acyrthosiphon pisum (strain 5AT)</name>
    <dbReference type="NCBI Taxonomy" id="572265"/>
    <lineage>
        <taxon>Bacteria</taxon>
        <taxon>Pseudomonadati</taxon>
        <taxon>Pseudomonadota</taxon>
        <taxon>Gammaproteobacteria</taxon>
        <taxon>Enterobacterales</taxon>
        <taxon>Enterobacteriaceae</taxon>
        <taxon>aphid secondary symbionts</taxon>
        <taxon>Candidatus Hamiltonella</taxon>
    </lineage>
</organism>
<feature type="chain" id="PRO_1000204830" description="Phenylalanine--tRNA ligase alpha subunit">
    <location>
        <begin position="1"/>
        <end position="327"/>
    </location>
</feature>
<feature type="binding site" evidence="1">
    <location>
        <position position="252"/>
    </location>
    <ligand>
        <name>Mg(2+)</name>
        <dbReference type="ChEBI" id="CHEBI:18420"/>
        <note>shared with beta subunit</note>
    </ligand>
</feature>
<keyword id="KW-0030">Aminoacyl-tRNA synthetase</keyword>
<keyword id="KW-0067">ATP-binding</keyword>
<keyword id="KW-0963">Cytoplasm</keyword>
<keyword id="KW-0436">Ligase</keyword>
<keyword id="KW-0460">Magnesium</keyword>
<keyword id="KW-0479">Metal-binding</keyword>
<keyword id="KW-0547">Nucleotide-binding</keyword>
<keyword id="KW-0648">Protein biosynthesis</keyword>
<name>SYFA_HAMD5</name>
<gene>
    <name evidence="1" type="primary">pheS</name>
    <name type="ordered locus">HDEF_1828</name>
</gene>
<protein>
    <recommendedName>
        <fullName evidence="1">Phenylalanine--tRNA ligase alpha subunit</fullName>
        <ecNumber evidence="1">6.1.1.20</ecNumber>
    </recommendedName>
    <alternativeName>
        <fullName evidence="1">Phenylalanyl-tRNA synthetase alpha subunit</fullName>
        <shortName evidence="1">PheRS</shortName>
    </alternativeName>
</protein>
<evidence type="ECO:0000255" key="1">
    <source>
        <dbReference type="HAMAP-Rule" id="MF_00281"/>
    </source>
</evidence>
<accession>C4K781</accession>